<dbReference type="EC" id="6.1.1.15" evidence="1"/>
<dbReference type="EMBL" id="CP000941">
    <property type="protein sequence ID" value="ACA12686.1"/>
    <property type="molecule type" value="Genomic_DNA"/>
</dbReference>
<dbReference type="RefSeq" id="WP_004083587.1">
    <property type="nucleotide sequence ID" value="NC_010513.1"/>
</dbReference>
<dbReference type="SMR" id="B0U4A7"/>
<dbReference type="KEGG" id="xfm:Xfasm12_1794"/>
<dbReference type="HOGENOM" id="CLU_016739_0_0_6"/>
<dbReference type="GO" id="GO:0005829">
    <property type="term" value="C:cytosol"/>
    <property type="evidence" value="ECO:0007669"/>
    <property type="project" value="TreeGrafter"/>
</dbReference>
<dbReference type="GO" id="GO:0002161">
    <property type="term" value="F:aminoacyl-tRNA deacylase activity"/>
    <property type="evidence" value="ECO:0007669"/>
    <property type="project" value="InterPro"/>
</dbReference>
<dbReference type="GO" id="GO:0005524">
    <property type="term" value="F:ATP binding"/>
    <property type="evidence" value="ECO:0007669"/>
    <property type="project" value="UniProtKB-UniRule"/>
</dbReference>
<dbReference type="GO" id="GO:0004827">
    <property type="term" value="F:proline-tRNA ligase activity"/>
    <property type="evidence" value="ECO:0007669"/>
    <property type="project" value="UniProtKB-UniRule"/>
</dbReference>
<dbReference type="GO" id="GO:0006433">
    <property type="term" value="P:prolyl-tRNA aminoacylation"/>
    <property type="evidence" value="ECO:0007669"/>
    <property type="project" value="UniProtKB-UniRule"/>
</dbReference>
<dbReference type="CDD" id="cd04334">
    <property type="entry name" value="ProRS-INS"/>
    <property type="match status" value="1"/>
</dbReference>
<dbReference type="CDD" id="cd00861">
    <property type="entry name" value="ProRS_anticodon_short"/>
    <property type="match status" value="1"/>
</dbReference>
<dbReference type="CDD" id="cd00779">
    <property type="entry name" value="ProRS_core_prok"/>
    <property type="match status" value="1"/>
</dbReference>
<dbReference type="FunFam" id="3.30.930.10:FF:000012">
    <property type="entry name" value="Proline--tRNA ligase"/>
    <property type="match status" value="1"/>
</dbReference>
<dbReference type="Gene3D" id="3.40.50.800">
    <property type="entry name" value="Anticodon-binding domain"/>
    <property type="match status" value="1"/>
</dbReference>
<dbReference type="Gene3D" id="3.30.930.10">
    <property type="entry name" value="Bira Bifunctional Protein, Domain 2"/>
    <property type="match status" value="2"/>
</dbReference>
<dbReference type="Gene3D" id="3.90.960.10">
    <property type="entry name" value="YbaK/aminoacyl-tRNA synthetase-associated domain"/>
    <property type="match status" value="1"/>
</dbReference>
<dbReference type="HAMAP" id="MF_01569">
    <property type="entry name" value="Pro_tRNA_synth_type1"/>
    <property type="match status" value="1"/>
</dbReference>
<dbReference type="InterPro" id="IPR002314">
    <property type="entry name" value="aa-tRNA-synt_IIb"/>
</dbReference>
<dbReference type="InterPro" id="IPR006195">
    <property type="entry name" value="aa-tRNA-synth_II"/>
</dbReference>
<dbReference type="InterPro" id="IPR045864">
    <property type="entry name" value="aa-tRNA-synth_II/BPL/LPL"/>
</dbReference>
<dbReference type="InterPro" id="IPR004154">
    <property type="entry name" value="Anticodon-bd"/>
</dbReference>
<dbReference type="InterPro" id="IPR036621">
    <property type="entry name" value="Anticodon-bd_dom_sf"/>
</dbReference>
<dbReference type="InterPro" id="IPR002316">
    <property type="entry name" value="Pro-tRNA-ligase_IIa"/>
</dbReference>
<dbReference type="InterPro" id="IPR004500">
    <property type="entry name" value="Pro-tRNA-synth_IIa_bac-type"/>
</dbReference>
<dbReference type="InterPro" id="IPR023717">
    <property type="entry name" value="Pro-tRNA-Synthase_IIa_type1"/>
</dbReference>
<dbReference type="InterPro" id="IPR050062">
    <property type="entry name" value="Pro-tRNA_synthetase"/>
</dbReference>
<dbReference type="InterPro" id="IPR044140">
    <property type="entry name" value="ProRS_anticodon_short"/>
</dbReference>
<dbReference type="InterPro" id="IPR033730">
    <property type="entry name" value="ProRS_core_prok"/>
</dbReference>
<dbReference type="InterPro" id="IPR036754">
    <property type="entry name" value="YbaK/aa-tRNA-synt-asso_dom_sf"/>
</dbReference>
<dbReference type="InterPro" id="IPR007214">
    <property type="entry name" value="YbaK/aa-tRNA-synth-assoc-dom"/>
</dbReference>
<dbReference type="NCBIfam" id="NF006625">
    <property type="entry name" value="PRK09194.1"/>
    <property type="match status" value="1"/>
</dbReference>
<dbReference type="NCBIfam" id="TIGR00409">
    <property type="entry name" value="proS_fam_II"/>
    <property type="match status" value="1"/>
</dbReference>
<dbReference type="PANTHER" id="PTHR42753">
    <property type="entry name" value="MITOCHONDRIAL RIBOSOME PROTEIN L39/PROLYL-TRNA LIGASE FAMILY MEMBER"/>
    <property type="match status" value="1"/>
</dbReference>
<dbReference type="PANTHER" id="PTHR42753:SF2">
    <property type="entry name" value="PROLINE--TRNA LIGASE"/>
    <property type="match status" value="1"/>
</dbReference>
<dbReference type="Pfam" id="PF03129">
    <property type="entry name" value="HGTP_anticodon"/>
    <property type="match status" value="1"/>
</dbReference>
<dbReference type="Pfam" id="PF00587">
    <property type="entry name" value="tRNA-synt_2b"/>
    <property type="match status" value="1"/>
</dbReference>
<dbReference type="Pfam" id="PF04073">
    <property type="entry name" value="tRNA_edit"/>
    <property type="match status" value="1"/>
</dbReference>
<dbReference type="PRINTS" id="PR01046">
    <property type="entry name" value="TRNASYNTHPRO"/>
</dbReference>
<dbReference type="SUPFAM" id="SSF52954">
    <property type="entry name" value="Class II aaRS ABD-related"/>
    <property type="match status" value="1"/>
</dbReference>
<dbReference type="SUPFAM" id="SSF55681">
    <property type="entry name" value="Class II aaRS and biotin synthetases"/>
    <property type="match status" value="1"/>
</dbReference>
<dbReference type="SUPFAM" id="SSF55826">
    <property type="entry name" value="YbaK/ProRS associated domain"/>
    <property type="match status" value="1"/>
</dbReference>
<dbReference type="PROSITE" id="PS50862">
    <property type="entry name" value="AA_TRNA_LIGASE_II"/>
    <property type="match status" value="1"/>
</dbReference>
<protein>
    <recommendedName>
        <fullName evidence="1">Proline--tRNA ligase</fullName>
        <ecNumber evidence="1">6.1.1.15</ecNumber>
    </recommendedName>
    <alternativeName>
        <fullName evidence="1">Prolyl-tRNA synthetase</fullName>
        <shortName evidence="1">ProRS</shortName>
    </alternativeName>
</protein>
<feature type="chain" id="PRO_1000199443" description="Proline--tRNA ligase">
    <location>
        <begin position="1"/>
        <end position="564"/>
    </location>
</feature>
<reference key="1">
    <citation type="journal article" date="2010" name="J. Bacteriol.">
        <title>Whole genome sequences of two Xylella fastidiosa strains (M12 and M23) causing almond leaf scorch disease in California.</title>
        <authorList>
            <person name="Chen J."/>
            <person name="Xie G."/>
            <person name="Han S."/>
            <person name="Chertkov O."/>
            <person name="Sims D."/>
            <person name="Civerolo E.L."/>
        </authorList>
    </citation>
    <scope>NUCLEOTIDE SEQUENCE [LARGE SCALE GENOMIC DNA]</scope>
    <source>
        <strain>M12</strain>
    </source>
</reference>
<evidence type="ECO:0000255" key="1">
    <source>
        <dbReference type="HAMAP-Rule" id="MF_01569"/>
    </source>
</evidence>
<proteinExistence type="inferred from homology"/>
<gene>
    <name evidence="1" type="primary">proS</name>
    <name type="ordered locus">Xfasm12_1794</name>
</gene>
<sequence length="564" mass="62528">MRLSEFHLHTTKEIPADAELVSHRLMLRAGMIRKLASGLYTWSPLGLRVLRKVEAIVRDEMNRAGAVEMLLPTIQPRELWEESERWEKFGSQLLKIKDRKQAEYCYSPTAEEAVTDYVRQELTSYKQLPVNLYQIQTKFRDEIRPRFGVMRAREFVMKDAYSFHLSDADLVREYENMRATYTRIFTRLGLEFRSVQADSGAIGGDASQEFHVIADSGEDVLAFSTGSDYAANIEAAIAATPGPRLTAKETLQKVSTPTQKRCEDVTALLDIPLQRMVKSIAVMTDSGFFLALLRGDHTLNDIKLSRLPGLANFRLANEVEIARHLGSEPGFLGPVCPGMSIRIIADCEVAVMADFVVGANEVGFHLVGVNWGRDLPEPEVVADIRNVIEGDRAVDGGKICIARGIEVGHVFQLGRKYAEAMKATVLDEYGKAVTMTMGCYGIGVSRIVAAAIEQNHDVAGIIWPAPIAPWQVAVCVINPKKDPVIIAAAELLLAELQSADVDTVLDDRGLRPGVMFADMELIGIPHRIVVSERGLAAGTYEYRARRTAMVENLDKTTLLTRIKA</sequence>
<name>SYP_XYLFM</name>
<comment type="function">
    <text evidence="1">Catalyzes the attachment of proline to tRNA(Pro) in a two-step reaction: proline is first activated by ATP to form Pro-AMP and then transferred to the acceptor end of tRNA(Pro). As ProRS can inadvertently accommodate and process non-cognate amino acids such as alanine and cysteine, to avoid such errors it has two additional distinct editing activities against alanine. One activity is designated as 'pretransfer' editing and involves the tRNA(Pro)-independent hydrolysis of activated Ala-AMP. The other activity is designated 'posttransfer' editing and involves deacylation of mischarged Ala-tRNA(Pro). The misacylated Cys-tRNA(Pro) is not edited by ProRS.</text>
</comment>
<comment type="catalytic activity">
    <reaction evidence="1">
        <text>tRNA(Pro) + L-proline + ATP = L-prolyl-tRNA(Pro) + AMP + diphosphate</text>
        <dbReference type="Rhea" id="RHEA:14305"/>
        <dbReference type="Rhea" id="RHEA-COMP:9700"/>
        <dbReference type="Rhea" id="RHEA-COMP:9702"/>
        <dbReference type="ChEBI" id="CHEBI:30616"/>
        <dbReference type="ChEBI" id="CHEBI:33019"/>
        <dbReference type="ChEBI" id="CHEBI:60039"/>
        <dbReference type="ChEBI" id="CHEBI:78442"/>
        <dbReference type="ChEBI" id="CHEBI:78532"/>
        <dbReference type="ChEBI" id="CHEBI:456215"/>
        <dbReference type="EC" id="6.1.1.15"/>
    </reaction>
</comment>
<comment type="subunit">
    <text evidence="1">Homodimer.</text>
</comment>
<comment type="subcellular location">
    <subcellularLocation>
        <location evidence="1">Cytoplasm</location>
    </subcellularLocation>
</comment>
<comment type="domain">
    <text evidence="1">Consists of three domains: the N-terminal catalytic domain, the editing domain and the C-terminal anticodon-binding domain.</text>
</comment>
<comment type="similarity">
    <text evidence="1">Belongs to the class-II aminoacyl-tRNA synthetase family. ProS type 1 subfamily.</text>
</comment>
<organism>
    <name type="scientific">Xylella fastidiosa (strain M12)</name>
    <dbReference type="NCBI Taxonomy" id="405440"/>
    <lineage>
        <taxon>Bacteria</taxon>
        <taxon>Pseudomonadati</taxon>
        <taxon>Pseudomonadota</taxon>
        <taxon>Gammaproteobacteria</taxon>
        <taxon>Lysobacterales</taxon>
        <taxon>Lysobacteraceae</taxon>
        <taxon>Xylella</taxon>
    </lineage>
</organism>
<keyword id="KW-0030">Aminoacyl-tRNA synthetase</keyword>
<keyword id="KW-0067">ATP-binding</keyword>
<keyword id="KW-0963">Cytoplasm</keyword>
<keyword id="KW-0436">Ligase</keyword>
<keyword id="KW-0547">Nucleotide-binding</keyword>
<keyword id="KW-0648">Protein biosynthesis</keyword>
<accession>B0U4A7</accession>